<feature type="chain" id="PRO_0000181506" description="Large ribosomal subunit protein bL25">
    <location>
        <begin position="1"/>
        <end position="218"/>
    </location>
</feature>
<feature type="region of interest" description="Disordered" evidence="2">
    <location>
        <begin position="187"/>
        <end position="218"/>
    </location>
</feature>
<feature type="compositionally biased region" description="Low complexity" evidence="2">
    <location>
        <begin position="202"/>
        <end position="218"/>
    </location>
</feature>
<protein>
    <recommendedName>
        <fullName evidence="1">Large ribosomal subunit protein bL25</fullName>
    </recommendedName>
    <alternativeName>
        <fullName evidence="3">50S ribosomal protein L25</fullName>
    </alternativeName>
    <alternativeName>
        <fullName evidence="1">General stress protein CTC</fullName>
    </alternativeName>
</protein>
<comment type="function">
    <text evidence="1">This is one of the proteins that binds to the 5S RNA in the ribosome where it forms part of the central protuberance.</text>
</comment>
<comment type="subunit">
    <text evidence="1">Part of the 50S ribosomal subunit; part of the 5S rRNA/L5/L18/L25 subcomplex. Contacts the 5S rRNA. Binds to the 5S rRNA independently of L5 and L18.</text>
</comment>
<comment type="similarity">
    <text evidence="1">Belongs to the bacterial ribosomal protein bL25 family. CTC subfamily.</text>
</comment>
<organism>
    <name type="scientific">Anaplasma marginale (strain St. Maries)</name>
    <dbReference type="NCBI Taxonomy" id="234826"/>
    <lineage>
        <taxon>Bacteria</taxon>
        <taxon>Pseudomonadati</taxon>
        <taxon>Pseudomonadota</taxon>
        <taxon>Alphaproteobacteria</taxon>
        <taxon>Rickettsiales</taxon>
        <taxon>Anaplasmataceae</taxon>
        <taxon>Anaplasma</taxon>
    </lineage>
</organism>
<gene>
    <name evidence="1" type="primary">rplY</name>
    <name evidence="1" type="synonym">ctc</name>
    <name type="ordered locus">AM1340</name>
</gene>
<evidence type="ECO:0000255" key="1">
    <source>
        <dbReference type="HAMAP-Rule" id="MF_01334"/>
    </source>
</evidence>
<evidence type="ECO:0000256" key="2">
    <source>
        <dbReference type="SAM" id="MobiDB-lite"/>
    </source>
</evidence>
<evidence type="ECO:0000305" key="3"/>
<sequence>MSHGDTIRVDASVRAKCGTGSARALRAAGLIPAVVYGKNRDAVNISLSHADFLKKCRTLPIFSQLIKLCIDGKEEFALTKEIQKHPVSGAVSHVDFQFVDRGAEIKVEVPLVFLNEQKCAGVKLGGALNILHRSLLIRCAPDAIPQSLEVDLLDLAIGHSIHVSDLALPETMQVAMKEENPVIASVSATAAVEEAKEDGAPEESAQGQGAAEAQETNK</sequence>
<accession>Q5P9A5</accession>
<name>RL25_ANAMM</name>
<reference key="1">
    <citation type="journal article" date="2005" name="Proc. Natl. Acad. Sci. U.S.A.">
        <title>Complete genome sequencing of Anaplasma marginale reveals that the surface is skewed to two superfamilies of outer membrane proteins.</title>
        <authorList>
            <person name="Brayton K.A."/>
            <person name="Kappmeyer L.S."/>
            <person name="Herndon D.R."/>
            <person name="Dark M.J."/>
            <person name="Tibbals D.L."/>
            <person name="Palmer G.H."/>
            <person name="McGuire T.C."/>
            <person name="Knowles D.P. Jr."/>
        </authorList>
    </citation>
    <scope>NUCLEOTIDE SEQUENCE [LARGE SCALE GENOMIC DNA]</scope>
    <source>
        <strain>St. Maries</strain>
    </source>
</reference>
<dbReference type="EMBL" id="CP000030">
    <property type="protein sequence ID" value="AAV87125.1"/>
    <property type="molecule type" value="Genomic_DNA"/>
</dbReference>
<dbReference type="RefSeq" id="WP_011114690.1">
    <property type="nucleotide sequence ID" value="NZ_AFMU01000059.1"/>
</dbReference>
<dbReference type="SMR" id="Q5P9A5"/>
<dbReference type="KEGG" id="ama:AM1340"/>
<dbReference type="HOGENOM" id="CLU_075939_0_1_5"/>
<dbReference type="GO" id="GO:0022625">
    <property type="term" value="C:cytosolic large ribosomal subunit"/>
    <property type="evidence" value="ECO:0007669"/>
    <property type="project" value="TreeGrafter"/>
</dbReference>
<dbReference type="GO" id="GO:0008097">
    <property type="term" value="F:5S rRNA binding"/>
    <property type="evidence" value="ECO:0007669"/>
    <property type="project" value="InterPro"/>
</dbReference>
<dbReference type="GO" id="GO:0003735">
    <property type="term" value="F:structural constituent of ribosome"/>
    <property type="evidence" value="ECO:0007669"/>
    <property type="project" value="InterPro"/>
</dbReference>
<dbReference type="GO" id="GO:0006412">
    <property type="term" value="P:translation"/>
    <property type="evidence" value="ECO:0007669"/>
    <property type="project" value="UniProtKB-UniRule"/>
</dbReference>
<dbReference type="CDD" id="cd00495">
    <property type="entry name" value="Ribosomal_L25_TL5_CTC"/>
    <property type="match status" value="1"/>
</dbReference>
<dbReference type="Gene3D" id="2.170.120.20">
    <property type="entry name" value="Ribosomal protein L25, beta domain"/>
    <property type="match status" value="1"/>
</dbReference>
<dbReference type="Gene3D" id="2.40.240.10">
    <property type="entry name" value="Ribosomal Protein L25, Chain P"/>
    <property type="match status" value="1"/>
</dbReference>
<dbReference type="HAMAP" id="MF_01334">
    <property type="entry name" value="Ribosomal_bL25_CTC"/>
    <property type="match status" value="1"/>
</dbReference>
<dbReference type="InterPro" id="IPR020056">
    <property type="entry name" value="Rbsml_bL25/Gln-tRNA_synth_N"/>
</dbReference>
<dbReference type="InterPro" id="IPR011035">
    <property type="entry name" value="Ribosomal_bL25/Gln-tRNA_synth"/>
</dbReference>
<dbReference type="InterPro" id="IPR020057">
    <property type="entry name" value="Ribosomal_bL25_b-dom"/>
</dbReference>
<dbReference type="InterPro" id="IPR037121">
    <property type="entry name" value="Ribosomal_bL25_C"/>
</dbReference>
<dbReference type="InterPro" id="IPR001021">
    <property type="entry name" value="Ribosomal_bL25_long"/>
</dbReference>
<dbReference type="InterPro" id="IPR029751">
    <property type="entry name" value="Ribosomal_L25_dom"/>
</dbReference>
<dbReference type="InterPro" id="IPR020930">
    <property type="entry name" value="Ribosomal_uL5_bac-type"/>
</dbReference>
<dbReference type="NCBIfam" id="TIGR00731">
    <property type="entry name" value="bL25_bact_ctc"/>
    <property type="match status" value="1"/>
</dbReference>
<dbReference type="NCBIfam" id="NF004128">
    <property type="entry name" value="PRK05618.1-2"/>
    <property type="match status" value="1"/>
</dbReference>
<dbReference type="NCBIfam" id="NF004612">
    <property type="entry name" value="PRK05943.1"/>
    <property type="match status" value="1"/>
</dbReference>
<dbReference type="PANTHER" id="PTHR33284">
    <property type="entry name" value="RIBOSOMAL PROTEIN L25/GLN-TRNA SYNTHETASE, ANTI-CODON-BINDING DOMAIN-CONTAINING PROTEIN"/>
    <property type="match status" value="1"/>
</dbReference>
<dbReference type="PANTHER" id="PTHR33284:SF1">
    <property type="entry name" value="RIBOSOMAL PROTEIN L25_GLN-TRNA SYNTHETASE, ANTI-CODON-BINDING DOMAIN-CONTAINING PROTEIN"/>
    <property type="match status" value="1"/>
</dbReference>
<dbReference type="Pfam" id="PF01386">
    <property type="entry name" value="Ribosomal_L25p"/>
    <property type="match status" value="1"/>
</dbReference>
<dbReference type="Pfam" id="PF14693">
    <property type="entry name" value="Ribosomal_TL5_C"/>
    <property type="match status" value="1"/>
</dbReference>
<dbReference type="SUPFAM" id="SSF50715">
    <property type="entry name" value="Ribosomal protein L25-like"/>
    <property type="match status" value="1"/>
</dbReference>
<proteinExistence type="inferred from homology"/>
<keyword id="KW-0687">Ribonucleoprotein</keyword>
<keyword id="KW-0689">Ribosomal protein</keyword>
<keyword id="KW-0694">RNA-binding</keyword>
<keyword id="KW-0699">rRNA-binding</keyword>